<protein>
    <recommendedName>
        <fullName>(R)-mandelonitrile lyase 1</fullName>
        <ecNumber>4.1.2.10</ecNumber>
    </recommendedName>
    <alternativeName>
        <fullName>Hydroxynitrile lyase 1</fullName>
        <shortName>(R)-oxynitrilase 1</shortName>
    </alternativeName>
</protein>
<comment type="function">
    <text>Involved in cyanogenesis, the release of HCN from injured tissues. Catalyzes the stereospecific addition of HCN to a variety of aldehydes in vitro. It is a major seed constituent, and could have the additional role of a storage form for reduced nitrogen.</text>
</comment>
<comment type="catalytic activity">
    <reaction>
        <text>(R)-mandelonitrile = benzaldehyde + hydrogen cyanide</text>
        <dbReference type="Rhea" id="RHEA:18313"/>
        <dbReference type="ChEBI" id="CHEBI:17169"/>
        <dbReference type="ChEBI" id="CHEBI:18407"/>
        <dbReference type="ChEBI" id="CHEBI:18450"/>
        <dbReference type="EC" id="4.1.2.10"/>
    </reaction>
</comment>
<comment type="cofactor">
    <cofactor>
        <name>FAD</name>
        <dbReference type="ChEBI" id="CHEBI:57692"/>
    </cofactor>
</comment>
<comment type="subunit">
    <text>Monomer.</text>
</comment>
<comment type="subcellular location">
    <subcellularLocation>
        <location>Vacuole</location>
        <location>Aleurone grain</location>
    </subcellularLocation>
    <text>Primarily found within protein bodies of the cotyledonary parenchyma cells, with lesser amounts within the procambium.</text>
</comment>
<comment type="tissue specificity">
    <text evidence="4">Seeds. Localized within cotyledonary parenchyma cells.</text>
</comment>
<comment type="developmental stage">
    <text evidence="3 4">Absent from maturing black cherry fruits until 6 weeks after flowering. Then, concomitant with cotyledon development, the level of enzyme increases with specificity for embryonal tissues.</text>
</comment>
<comment type="PTM">
    <text>Glycosylated.</text>
</comment>
<comment type="similarity">
    <text evidence="5">Belongs to the GMC oxidoreductase family.</text>
</comment>
<reference key="1">
    <citation type="journal article" date="1993" name="Plant Cell Physiol.">
        <title>Cloning of cDNA of Prunus serotina (R)-(+)-mandelonitrile lyase and identification of a putative FAD-binding site.</title>
        <authorList>
            <person name="Cheng I.-P."/>
            <person name="Poulton J.E."/>
        </authorList>
    </citation>
    <scope>NUCLEOTIDE SEQUENCE [MRNA]</scope>
    <scope>PARTIAL PROTEIN SEQUENCE</scope>
    <source>
        <tissue>Seed</tissue>
    </source>
</reference>
<reference key="2">
    <citation type="submission" date="1996-12" db="EMBL/GenBank/DDBJ databases">
        <authorList>
            <person name="Hu Z."/>
            <person name="Poulton J.E."/>
        </authorList>
    </citation>
    <scope>NUCLEOTIDE SEQUENCE [GENOMIC DNA]</scope>
</reference>
<reference key="3">
    <citation type="journal article" date="1991" name="Plant Physiol.">
        <title>Immunocytochemical localization of mandelonitrile lyase in mature black cherry (Prunus serotina Ehrh.) seeds.</title>
        <authorList>
            <person name="Wu H.-C."/>
            <person name="Poulton J.E."/>
        </authorList>
    </citation>
    <scope>PROTEIN SEQUENCE OF 28-43</scope>
    <scope>DEVELOPMENTAL STAGE</scope>
    <source>
        <tissue>Seed</tissue>
    </source>
</reference>
<reference key="4">
    <citation type="journal article" date="1995" name="Plant Physiol.">
        <title>Temporal and spatial expression of amygdalin hydrolase and (R)-(+)-mandelonitrile lyase in black cherry seeds.</title>
        <authorList>
            <person name="Zheng L."/>
            <person name="Poulton J.E."/>
        </authorList>
    </citation>
    <scope>DEVELOPMENTAL STAGE</scope>
    <scope>TISSUE SPECIFICITY</scope>
</reference>
<organism>
    <name type="scientific">Prunus serotina</name>
    <name type="common">Black cherry</name>
    <dbReference type="NCBI Taxonomy" id="23207"/>
    <lineage>
        <taxon>Eukaryota</taxon>
        <taxon>Viridiplantae</taxon>
        <taxon>Streptophyta</taxon>
        <taxon>Embryophyta</taxon>
        <taxon>Tracheophyta</taxon>
        <taxon>Spermatophyta</taxon>
        <taxon>Magnoliopsida</taxon>
        <taxon>eudicotyledons</taxon>
        <taxon>Gunneridae</taxon>
        <taxon>Pentapetalae</taxon>
        <taxon>rosids</taxon>
        <taxon>fabids</taxon>
        <taxon>Rosales</taxon>
        <taxon>Rosaceae</taxon>
        <taxon>Amygdaloideae</taxon>
        <taxon>Amygdaleae</taxon>
        <taxon>Prunus</taxon>
    </lineage>
</organism>
<gene>
    <name type="primary">MDL1</name>
</gene>
<feature type="signal peptide" evidence="3">
    <location>
        <begin position="1"/>
        <end position="27"/>
    </location>
</feature>
<feature type="chain" id="PRO_0000012340" description="(R)-mandelonitrile lyase 1">
    <location>
        <begin position="28"/>
        <end position="563"/>
    </location>
</feature>
<feature type="active site" description="Proton donor" evidence="1">
    <location>
        <position position="486"/>
    </location>
</feature>
<feature type="active site" description="Proton acceptor" evidence="1">
    <location>
        <position position="524"/>
    </location>
</feature>
<feature type="binding site" evidence="1">
    <location>
        <begin position="63"/>
        <end position="64"/>
    </location>
    <ligand>
        <name>FAD</name>
        <dbReference type="ChEBI" id="CHEBI:57692"/>
    </ligand>
</feature>
<feature type="binding site" evidence="1">
    <location>
        <begin position="82"/>
        <end position="83"/>
    </location>
    <ligand>
        <name>FAD</name>
        <dbReference type="ChEBI" id="CHEBI:57692"/>
    </ligand>
</feature>
<feature type="binding site" evidence="1">
    <location>
        <position position="129"/>
    </location>
    <ligand>
        <name>FAD</name>
        <dbReference type="ChEBI" id="CHEBI:57692"/>
    </ligand>
</feature>
<feature type="binding site" evidence="1">
    <location>
        <position position="133"/>
    </location>
    <ligand>
        <name>FAD</name>
        <dbReference type="ChEBI" id="CHEBI:57692"/>
    </ligand>
</feature>
<feature type="binding site" evidence="1">
    <location>
        <begin position="137"/>
        <end position="140"/>
    </location>
    <ligand>
        <name>FAD</name>
        <dbReference type="ChEBI" id="CHEBI:57692"/>
    </ligand>
</feature>
<feature type="binding site" evidence="1">
    <location>
        <position position="244"/>
    </location>
    <ligand>
        <name>FAD</name>
        <dbReference type="ChEBI" id="CHEBI:57692"/>
    </ligand>
</feature>
<feature type="binding site" evidence="1">
    <location>
        <position position="355"/>
    </location>
    <ligand>
        <name>substrate</name>
    </ligand>
</feature>
<feature type="binding site" evidence="1">
    <location>
        <position position="484"/>
    </location>
    <ligand>
        <name>substrate</name>
    </ligand>
</feature>
<feature type="binding site" evidence="1">
    <location>
        <begin position="485"/>
        <end position="486"/>
    </location>
    <ligand>
        <name>FAD</name>
        <dbReference type="ChEBI" id="CHEBI:57692"/>
    </ligand>
</feature>
<feature type="binding site" evidence="1">
    <location>
        <position position="514"/>
    </location>
    <ligand>
        <name>FAD</name>
        <dbReference type="ChEBI" id="CHEBI:57692"/>
    </ligand>
</feature>
<feature type="binding site" evidence="1">
    <location>
        <begin position="525"/>
        <end position="526"/>
    </location>
    <ligand>
        <name>FAD</name>
        <dbReference type="ChEBI" id="CHEBI:57692"/>
    </ligand>
</feature>
<feature type="glycosylation site" description="N-linked (GlcNAc...) asparagine" evidence="2">
    <location>
        <position position="145"/>
    </location>
</feature>
<feature type="glycosylation site" description="N-linked (GlcNAc...) asparagine" evidence="2">
    <location>
        <position position="162"/>
    </location>
</feature>
<feature type="glycosylation site" description="N-linked (GlcNAc...) asparagine" evidence="2">
    <location>
        <position position="379"/>
    </location>
</feature>
<feature type="disulfide bond" evidence="1">
    <location>
        <begin position="426"/>
        <end position="477"/>
    </location>
</feature>
<dbReference type="EC" id="4.1.2.10"/>
<dbReference type="EMBL" id="X72617">
    <property type="protein sequence ID" value="CAA51194.1"/>
    <property type="molecule type" value="mRNA"/>
</dbReference>
<dbReference type="EMBL" id="U78814">
    <property type="protein sequence ID" value="AAB38536.1"/>
    <property type="molecule type" value="Genomic_DNA"/>
</dbReference>
<dbReference type="PIR" id="S32156">
    <property type="entry name" value="S32156"/>
</dbReference>
<dbReference type="SMR" id="P52706"/>
<dbReference type="GlyCosmos" id="P52706">
    <property type="glycosylation" value="3 sites, No reported glycans"/>
</dbReference>
<dbReference type="BRENDA" id="4.1.2.10">
    <property type="organism ID" value="5069"/>
</dbReference>
<dbReference type="GO" id="GO:0033095">
    <property type="term" value="C:aleurone grain"/>
    <property type="evidence" value="ECO:0007669"/>
    <property type="project" value="UniProtKB-SubCell"/>
</dbReference>
<dbReference type="GO" id="GO:0005773">
    <property type="term" value="C:vacuole"/>
    <property type="evidence" value="ECO:0007669"/>
    <property type="project" value="UniProtKB-KW"/>
</dbReference>
<dbReference type="GO" id="GO:0050660">
    <property type="term" value="F:flavin adenine dinucleotide binding"/>
    <property type="evidence" value="ECO:0007669"/>
    <property type="project" value="InterPro"/>
</dbReference>
<dbReference type="GO" id="GO:0046593">
    <property type="term" value="F:mandelonitrile lyase activity"/>
    <property type="evidence" value="ECO:0007669"/>
    <property type="project" value="UniProtKB-EC"/>
</dbReference>
<dbReference type="GO" id="GO:0016614">
    <property type="term" value="F:oxidoreductase activity, acting on CH-OH group of donors"/>
    <property type="evidence" value="ECO:0007669"/>
    <property type="project" value="InterPro"/>
</dbReference>
<dbReference type="Gene3D" id="3.30.410.40">
    <property type="match status" value="1"/>
</dbReference>
<dbReference type="Gene3D" id="3.50.50.60">
    <property type="entry name" value="FAD/NAD(P)-binding domain"/>
    <property type="match status" value="1"/>
</dbReference>
<dbReference type="InterPro" id="IPR036188">
    <property type="entry name" value="FAD/NAD-bd_sf"/>
</dbReference>
<dbReference type="InterPro" id="IPR051871">
    <property type="entry name" value="GMC_Oxidoreductase-Related"/>
</dbReference>
<dbReference type="InterPro" id="IPR012132">
    <property type="entry name" value="GMC_OxRdtase"/>
</dbReference>
<dbReference type="InterPro" id="IPR000172">
    <property type="entry name" value="GMC_OxRdtase_N"/>
</dbReference>
<dbReference type="InterPro" id="IPR007867">
    <property type="entry name" value="GMC_OxRtase_C"/>
</dbReference>
<dbReference type="PANTHER" id="PTHR45968:SF23">
    <property type="entry name" value="GLUCOSE-METHANOL-CHOLINE OXIDOREDUCTASE N-TERMINAL DOMAIN-CONTAINING PROTEIN"/>
    <property type="match status" value="1"/>
</dbReference>
<dbReference type="PANTHER" id="PTHR45968">
    <property type="entry name" value="OSJNBA0019K04.7 PROTEIN"/>
    <property type="match status" value="1"/>
</dbReference>
<dbReference type="Pfam" id="PF05199">
    <property type="entry name" value="GMC_oxred_C"/>
    <property type="match status" value="1"/>
</dbReference>
<dbReference type="Pfam" id="PF00732">
    <property type="entry name" value="GMC_oxred_N"/>
    <property type="match status" value="1"/>
</dbReference>
<dbReference type="PIRSF" id="PIRSF000137">
    <property type="entry name" value="Alcohol_oxidase"/>
    <property type="match status" value="1"/>
</dbReference>
<dbReference type="SUPFAM" id="SSF54373">
    <property type="entry name" value="FAD-linked reductases, C-terminal domain"/>
    <property type="match status" value="1"/>
</dbReference>
<dbReference type="SUPFAM" id="SSF51905">
    <property type="entry name" value="FAD/NAD(P)-binding domain"/>
    <property type="match status" value="1"/>
</dbReference>
<dbReference type="PROSITE" id="PS00623">
    <property type="entry name" value="GMC_OXRED_1"/>
    <property type="match status" value="1"/>
</dbReference>
<dbReference type="PROSITE" id="PS00624">
    <property type="entry name" value="GMC_OXRED_2"/>
    <property type="match status" value="1"/>
</dbReference>
<proteinExistence type="evidence at protein level"/>
<sequence>MEKSTMSAILLVLHLFVLLLQYSEVHSLATTSNHDFSYLRFAYDATDLELEGSYDYVIVGGGTSGCPLAATLSEKYKVLVLERGSLPTAYPNVLTADGFVYNLQQEDDGKTPVERFVSEDGIDNVRGRVLGGTSMINAGVYARANTSIYSASGVDWDMDLVNKTYEWVEDTIVFKPNYQPWQSVTGTAFLEAGVDPNHGFSLDHEAGTRITGSTFDNKGTRHAADELLNKGNSNNLRVGVHASVEKIIFSNAPGLTATGVIYRDSNGTPHRAFVRSKGEVIVSAGTIGTPQLLLLSGVGPESYLSSLNIPVVLSHPYVGQFLHDNPRNFINILPPNPIEPTIVTVLGISNDFYQCSFSSLPFTTPPFSFFPSTSYPLPNSTFAHFASKVAGPLSYGSLTLKSSSNVRVSPNVKFNYYSNPTDLSHCVSGMKKIGELLSTDALKPYKVEDLPGIEGFNILGIPLPKDQTDDAAFETFCRESVASYWHYHGGCLVGKVLDGDFRVTGIDALRVVDGSTFPYTPASHPQGFYLMLGRYVGIKILQERSASDLKILDSLKSAASLVL</sequence>
<name>MDL1_PRUSE</name>
<accession>P52706</accession>
<keyword id="KW-0903">Direct protein sequencing</keyword>
<keyword id="KW-1015">Disulfide bond</keyword>
<keyword id="KW-0274">FAD</keyword>
<keyword id="KW-0285">Flavoprotein</keyword>
<keyword id="KW-0325">Glycoprotein</keyword>
<keyword id="KW-0456">Lyase</keyword>
<keyword id="KW-0732">Signal</keyword>
<keyword id="KW-0926">Vacuole</keyword>
<evidence type="ECO:0000250" key="1"/>
<evidence type="ECO:0000255" key="2"/>
<evidence type="ECO:0000269" key="3">
    <source>
    </source>
</evidence>
<evidence type="ECO:0000269" key="4">
    <source>
    </source>
</evidence>
<evidence type="ECO:0000305" key="5"/>